<feature type="chain" id="PRO_1000164062" description="UPF0298 protein SEQ_1830">
    <location>
        <begin position="1"/>
        <end position="94"/>
    </location>
</feature>
<dbReference type="EMBL" id="FM204883">
    <property type="protein sequence ID" value="CAW94980.1"/>
    <property type="molecule type" value="Genomic_DNA"/>
</dbReference>
<dbReference type="RefSeq" id="WP_012516199.1">
    <property type="nucleotide sequence ID" value="NC_012471.1"/>
</dbReference>
<dbReference type="SMR" id="C0M7M6"/>
<dbReference type="KEGG" id="seu:SEQ_1830"/>
<dbReference type="HOGENOM" id="CLU_159890_1_0_9"/>
<dbReference type="OrthoDB" id="2990788at2"/>
<dbReference type="Proteomes" id="UP000001365">
    <property type="component" value="Chromosome"/>
</dbReference>
<dbReference type="GO" id="GO:0005737">
    <property type="term" value="C:cytoplasm"/>
    <property type="evidence" value="ECO:0007669"/>
    <property type="project" value="UniProtKB-SubCell"/>
</dbReference>
<dbReference type="HAMAP" id="MF_01126">
    <property type="entry name" value="UPF0298"/>
    <property type="match status" value="1"/>
</dbReference>
<dbReference type="InterPro" id="IPR016979">
    <property type="entry name" value="DUF2129"/>
</dbReference>
<dbReference type="NCBIfam" id="NF002631">
    <property type="entry name" value="PRK02302.1"/>
    <property type="match status" value="1"/>
</dbReference>
<dbReference type="Pfam" id="PF09902">
    <property type="entry name" value="DUF2129"/>
    <property type="match status" value="1"/>
</dbReference>
<dbReference type="PIRSF" id="PIRSF031653">
    <property type="entry name" value="UCP031653"/>
    <property type="match status" value="1"/>
</dbReference>
<sequence>MFQKQQRIGLVIYLYYNRDARKVMKYGDLYYHSRRSRYLVIYINKEDMEEKLKDISRLTFVKEVKVSAFDDIDCDFVGNLHREPLEPQALPEQG</sequence>
<organism>
    <name type="scientific">Streptococcus equi subsp. equi (strain 4047)</name>
    <dbReference type="NCBI Taxonomy" id="553482"/>
    <lineage>
        <taxon>Bacteria</taxon>
        <taxon>Bacillati</taxon>
        <taxon>Bacillota</taxon>
        <taxon>Bacilli</taxon>
        <taxon>Lactobacillales</taxon>
        <taxon>Streptococcaceae</taxon>
        <taxon>Streptococcus</taxon>
    </lineage>
</organism>
<protein>
    <recommendedName>
        <fullName evidence="1">UPF0298 protein SEQ_1830</fullName>
    </recommendedName>
</protein>
<name>Y1830_STRE4</name>
<comment type="subcellular location">
    <subcellularLocation>
        <location evidence="1">Cytoplasm</location>
    </subcellularLocation>
</comment>
<comment type="similarity">
    <text evidence="1">Belongs to the UPF0298 family.</text>
</comment>
<reference key="1">
    <citation type="journal article" date="2009" name="PLoS Pathog.">
        <title>Genomic evidence for the evolution of Streptococcus equi: host restriction, increased virulence, and genetic exchange with human pathogens.</title>
        <authorList>
            <person name="Holden M.T.G."/>
            <person name="Heather Z."/>
            <person name="Paillot R."/>
            <person name="Steward K.F."/>
            <person name="Webb K."/>
            <person name="Ainslie F."/>
            <person name="Jourdan T."/>
            <person name="Bason N.C."/>
            <person name="Holroyd N.E."/>
            <person name="Mungall K."/>
            <person name="Quail M.A."/>
            <person name="Sanders M."/>
            <person name="Simmonds M."/>
            <person name="Willey D."/>
            <person name="Brooks K."/>
            <person name="Aanensen D.M."/>
            <person name="Spratt B.G."/>
            <person name="Jolley K.A."/>
            <person name="Maiden M.C.J."/>
            <person name="Kehoe M."/>
            <person name="Chanter N."/>
            <person name="Bentley S.D."/>
            <person name="Robinson C."/>
            <person name="Maskell D.J."/>
            <person name="Parkhill J."/>
            <person name="Waller A.S."/>
        </authorList>
    </citation>
    <scope>NUCLEOTIDE SEQUENCE [LARGE SCALE GENOMIC DNA]</scope>
    <source>
        <strain>4047</strain>
    </source>
</reference>
<evidence type="ECO:0000255" key="1">
    <source>
        <dbReference type="HAMAP-Rule" id="MF_01126"/>
    </source>
</evidence>
<accession>C0M7M6</accession>
<keyword id="KW-0963">Cytoplasm</keyword>
<proteinExistence type="inferred from homology"/>
<gene>
    <name type="ordered locus">SEQ_1830</name>
</gene>